<dbReference type="EC" id="2.7.1.33" evidence="1"/>
<dbReference type="EMBL" id="AP009044">
    <property type="protein sequence ID" value="BAF54062.1"/>
    <property type="molecule type" value="Genomic_DNA"/>
</dbReference>
<dbReference type="RefSeq" id="WP_003856789.1">
    <property type="nucleotide sequence ID" value="NC_009342.1"/>
</dbReference>
<dbReference type="SMR" id="A4QCW5"/>
<dbReference type="KEGG" id="cgt:cgR_1086"/>
<dbReference type="HOGENOM" id="CLU_053818_1_1_11"/>
<dbReference type="PhylomeDB" id="A4QCW5"/>
<dbReference type="UniPathway" id="UPA00241">
    <property type="reaction ID" value="UER00352"/>
</dbReference>
<dbReference type="Proteomes" id="UP000006698">
    <property type="component" value="Chromosome"/>
</dbReference>
<dbReference type="GO" id="GO:0005737">
    <property type="term" value="C:cytoplasm"/>
    <property type="evidence" value="ECO:0007669"/>
    <property type="project" value="UniProtKB-SubCell"/>
</dbReference>
<dbReference type="GO" id="GO:0005524">
    <property type="term" value="F:ATP binding"/>
    <property type="evidence" value="ECO:0007669"/>
    <property type="project" value="UniProtKB-UniRule"/>
</dbReference>
<dbReference type="GO" id="GO:0004594">
    <property type="term" value="F:pantothenate kinase activity"/>
    <property type="evidence" value="ECO:0007669"/>
    <property type="project" value="UniProtKB-UniRule"/>
</dbReference>
<dbReference type="GO" id="GO:0015937">
    <property type="term" value="P:coenzyme A biosynthetic process"/>
    <property type="evidence" value="ECO:0007669"/>
    <property type="project" value="UniProtKB-UniRule"/>
</dbReference>
<dbReference type="CDD" id="cd02025">
    <property type="entry name" value="PanK"/>
    <property type="match status" value="1"/>
</dbReference>
<dbReference type="Gene3D" id="3.40.50.300">
    <property type="entry name" value="P-loop containing nucleotide triphosphate hydrolases"/>
    <property type="match status" value="1"/>
</dbReference>
<dbReference type="HAMAP" id="MF_00215">
    <property type="entry name" value="Pantothen_kinase_1"/>
    <property type="match status" value="1"/>
</dbReference>
<dbReference type="InterPro" id="IPR027417">
    <property type="entry name" value="P-loop_NTPase"/>
</dbReference>
<dbReference type="InterPro" id="IPR004566">
    <property type="entry name" value="PanK"/>
</dbReference>
<dbReference type="InterPro" id="IPR006083">
    <property type="entry name" value="PRK/URK"/>
</dbReference>
<dbReference type="NCBIfam" id="TIGR00554">
    <property type="entry name" value="panK_bact"/>
    <property type="match status" value="1"/>
</dbReference>
<dbReference type="PANTHER" id="PTHR10285">
    <property type="entry name" value="URIDINE KINASE"/>
    <property type="match status" value="1"/>
</dbReference>
<dbReference type="Pfam" id="PF00485">
    <property type="entry name" value="PRK"/>
    <property type="match status" value="1"/>
</dbReference>
<dbReference type="PIRSF" id="PIRSF000545">
    <property type="entry name" value="Pantothenate_kin"/>
    <property type="match status" value="1"/>
</dbReference>
<dbReference type="SUPFAM" id="SSF52540">
    <property type="entry name" value="P-loop containing nucleoside triphosphate hydrolases"/>
    <property type="match status" value="1"/>
</dbReference>
<organism>
    <name type="scientific">Corynebacterium glutamicum (strain R)</name>
    <dbReference type="NCBI Taxonomy" id="340322"/>
    <lineage>
        <taxon>Bacteria</taxon>
        <taxon>Bacillati</taxon>
        <taxon>Actinomycetota</taxon>
        <taxon>Actinomycetes</taxon>
        <taxon>Mycobacteriales</taxon>
        <taxon>Corynebacteriaceae</taxon>
        <taxon>Corynebacterium</taxon>
    </lineage>
</organism>
<gene>
    <name evidence="1" type="primary">coaA</name>
    <name type="ordered locus">cgR_1086</name>
</gene>
<reference key="1">
    <citation type="journal article" date="2007" name="Microbiology">
        <title>Comparative analysis of the Corynebacterium glutamicum group and complete genome sequence of strain R.</title>
        <authorList>
            <person name="Yukawa H."/>
            <person name="Omumasaba C.A."/>
            <person name="Nonaka H."/>
            <person name="Kos P."/>
            <person name="Okai N."/>
            <person name="Suzuki N."/>
            <person name="Suda M."/>
            <person name="Tsuge Y."/>
            <person name="Watanabe J."/>
            <person name="Ikeda Y."/>
            <person name="Vertes A.A."/>
            <person name="Inui M."/>
        </authorList>
    </citation>
    <scope>NUCLEOTIDE SEQUENCE [LARGE SCALE GENOMIC DNA]</scope>
    <source>
        <strain>R</strain>
    </source>
</reference>
<comment type="catalytic activity">
    <reaction evidence="1">
        <text>(R)-pantothenate + ATP = (R)-4'-phosphopantothenate + ADP + H(+)</text>
        <dbReference type="Rhea" id="RHEA:16373"/>
        <dbReference type="ChEBI" id="CHEBI:10986"/>
        <dbReference type="ChEBI" id="CHEBI:15378"/>
        <dbReference type="ChEBI" id="CHEBI:29032"/>
        <dbReference type="ChEBI" id="CHEBI:30616"/>
        <dbReference type="ChEBI" id="CHEBI:456216"/>
        <dbReference type="EC" id="2.7.1.33"/>
    </reaction>
</comment>
<comment type="pathway">
    <text evidence="1">Cofactor biosynthesis; coenzyme A biosynthesis; CoA from (R)-pantothenate: step 1/5.</text>
</comment>
<comment type="subcellular location">
    <subcellularLocation>
        <location evidence="1">Cytoplasm</location>
    </subcellularLocation>
</comment>
<comment type="similarity">
    <text evidence="1">Belongs to the prokaryotic pantothenate kinase family.</text>
</comment>
<protein>
    <recommendedName>
        <fullName evidence="1">Pantothenate kinase</fullName>
        <ecNumber evidence="1">2.7.1.33</ecNumber>
    </recommendedName>
    <alternativeName>
        <fullName evidence="1">Pantothenic acid kinase</fullName>
    </alternativeName>
</protein>
<accession>A4QCW5</accession>
<feature type="chain" id="PRO_1000058631" description="Pantothenate kinase">
    <location>
        <begin position="1"/>
        <end position="323"/>
    </location>
</feature>
<feature type="region of interest" description="Disordered" evidence="2">
    <location>
        <begin position="1"/>
        <end position="24"/>
    </location>
</feature>
<feature type="compositionally biased region" description="Polar residues" evidence="2">
    <location>
        <begin position="1"/>
        <end position="12"/>
    </location>
</feature>
<feature type="binding site" evidence="1">
    <location>
        <begin position="108"/>
        <end position="115"/>
    </location>
    <ligand>
        <name>ATP</name>
        <dbReference type="ChEBI" id="CHEBI:30616"/>
    </ligand>
</feature>
<sequence length="323" mass="36322">MAEQNAASTTGVKPSPRTPDFSPYLDFDRAQWRELRNSMPQVLTQKEVIELRGIGENIDLAEVAEVYLPLSRLIHLQVAARQQLTAATETFLGTSPSTSVPFVIGVAGSVAVGKSTTARLLQVLLQRWNSHPRVDLVTTDGFLYPGAELTRRGLMSRKGFPESYDQRALLRFVTDVKSGKLEVNAPVYSHTAYDRVPGEFTTVRQPDILIVEGLNVLQTGPTLMVSDLFDFSVYVDARTEDIEKWYIDRFLKLRDTAFRRPGAHFSHYADMADPESIAVARELWQSINLPNLVENILPTRVRASLVLKKGSDHLVERVRMRKI</sequence>
<evidence type="ECO:0000255" key="1">
    <source>
        <dbReference type="HAMAP-Rule" id="MF_00215"/>
    </source>
</evidence>
<evidence type="ECO:0000256" key="2">
    <source>
        <dbReference type="SAM" id="MobiDB-lite"/>
    </source>
</evidence>
<keyword id="KW-0067">ATP-binding</keyword>
<keyword id="KW-0173">Coenzyme A biosynthesis</keyword>
<keyword id="KW-0963">Cytoplasm</keyword>
<keyword id="KW-0418">Kinase</keyword>
<keyword id="KW-0547">Nucleotide-binding</keyword>
<keyword id="KW-0808">Transferase</keyword>
<proteinExistence type="inferred from homology"/>
<name>COAA_CORGB</name>